<evidence type="ECO:0000250" key="1"/>
<evidence type="ECO:0000255" key="2">
    <source>
        <dbReference type="PROSITE-ProRule" id="PRU00061"/>
    </source>
</evidence>
<evidence type="ECO:0000255" key="3">
    <source>
        <dbReference type="PROSITE-ProRule" id="PRU00136"/>
    </source>
</evidence>
<evidence type="ECO:0000256" key="4">
    <source>
        <dbReference type="SAM" id="MobiDB-lite"/>
    </source>
</evidence>
<evidence type="ECO:0000269" key="5">
    <source>
    </source>
</evidence>
<evidence type="ECO:0000303" key="6">
    <source>
    </source>
</evidence>
<evidence type="ECO:0000305" key="7"/>
<comment type="function">
    <text evidence="7">Involved in inflammation.</text>
</comment>
<comment type="subcellular location">
    <subcellularLocation>
        <location evidence="1">Cytoplasm</location>
    </subcellularLocation>
</comment>
<comment type="alternative products">
    <event type="alternative splicing"/>
    <isoform>
        <id>Q86W28-1</id>
        <name>1</name>
        <sequence type="displayed"/>
    </isoform>
    <isoform>
        <id>Q86W28-2</id>
        <name>2</name>
        <sequence type="described" ref="VSP_024274"/>
    </isoform>
</comment>
<comment type="similarity">
    <text evidence="7">Belongs to the NLRP family.</text>
</comment>
<accession>Q86W28</accession>
<accession>Q7RTR4</accession>
<sequence length="1048" mass="119430">MSDVNPPSDTPIPFSSSSTHSSHIPPWTFSCYPGSPCENGVMLYMRNVSHEELQRFKQLLLTELSTGTMPITWDQVETASWAEVVHLLIERFPGRRAWDVTSNIFAIMNCDKMCVVVRREINAILPTLEPEDLNVGETQVNLEEGESGKIRRYKSNVMEKFFPIWDITTWPGNQRDFFYQGVHRHEEYLPCLLLPKRPQGRQPKTVAIQGAPGIGKTILAKKVMFEWARNKFYAHKRWCAFYFHCQEVNQTTDQSFSELIEQKWPGSQDLVSKIMSKPDQLLLLLDGFEELTSTLIDRLEDLSEDWRQKLPGSVLLSSLLSKTMLPEATLLIMIRFTSWQTCKPLLKCPSLVTLPGFNTMEKIKYFQMYFGHTEEGDQVLSFAMENTILFSMCRVPVVCWMVCSGLKQQMERGNNLTQSCPNATSVFVRYISSLFPTRAENFSRKIHQAQLEGLCHLAADSMWHRKWVLGKEDLEEAKLDQTGVTAFLGMSILRRIAGEEDHYVFTLVTFQEFFAALFYVLCFPQRLKNFHVLSHVNIQRLIASPRGSKSYLSHMGLFLFGFLNEACASAVEQSFQCKVSFGNKRKLLKVIPLLHKCDPPSPGSGVPQLFYCLHEIREEAFVSQALNDYHKVVLRIGNNKEVQVSAFCLKRCQYLHEVELTVTLNFMNVWKLSSSSHPGSEAPESNGLHRWWQDLCSVFATNDKLEVLTMTNSVLGPPFLKALAAALRHPQCKLQKLLLRRVNSTMLNQDLIGVLTGNQHLRYLEIQHVEVESKAVKLLCRVLRSPRCRLQCLRLEDCLATPRIWTDLGNNLQGNGHLKTLILRKNSLENCGAYYLSVAQLERLSIENCNLTQLTCESLASCLRQSKMLTHLSLAENALKDEGAKHIWNALPHLRCPLQRLVLRKCDLTFNCCQDMISALCKNKTLKSLDLSFNSLKDDGVILLCEALKNPDCTLQILELENCLFTSICCQAMASMLRKNQHLRHLDLSKNAIGVYGILTLCEAFSSQKKREEVIFCIPAWTRITSFSPTPHPPDFTGKSDCLSQINP</sequence>
<gene>
    <name type="primary">NLRP8</name>
    <name type="synonym">NALP8</name>
    <name type="synonym">NOD16</name>
    <name type="synonym">PAN4</name>
</gene>
<reference key="1">
    <citation type="journal article" date="2003" name="Nat. Rev. Mol. Cell Biol.">
        <title>NALPs: a novel protein family involved in inflammation.</title>
        <authorList>
            <person name="Tschopp J."/>
            <person name="Martinon F."/>
            <person name="Burns K."/>
        </authorList>
    </citation>
    <scope>NUCLEOTIDE SEQUENCE [MRNA] (ISOFORM 2)</scope>
</reference>
<reference key="2">
    <citation type="journal article" date="2003" name="Nat. Rev. Immunol.">
        <title>NODs: intracellular proteins involved in inflammation and apoptosis.</title>
        <authorList>
            <person name="Inohara N."/>
            <person name="Nunez G."/>
        </authorList>
    </citation>
    <scope>IDENTIFICATION [MRNA] (ISOFORM 1)</scope>
</reference>
<reference key="3">
    <citation type="journal article" date="2006" name="Science">
        <title>The consensus coding sequences of human breast and colorectal cancers.</title>
        <authorList>
            <person name="Sjoeblom T."/>
            <person name="Jones S."/>
            <person name="Wood L.D."/>
            <person name="Parsons D.W."/>
            <person name="Lin J."/>
            <person name="Barber T.D."/>
            <person name="Mandelker D."/>
            <person name="Leary R.J."/>
            <person name="Ptak J."/>
            <person name="Silliman N."/>
            <person name="Szabo S."/>
            <person name="Buckhaults P."/>
            <person name="Farrell C."/>
            <person name="Meeh P."/>
            <person name="Markowitz S.D."/>
            <person name="Willis J."/>
            <person name="Dawson D."/>
            <person name="Willson J.K.V."/>
            <person name="Gazdar A.F."/>
            <person name="Hartigan J."/>
            <person name="Wu L."/>
            <person name="Liu C."/>
            <person name="Parmigiani G."/>
            <person name="Park B.H."/>
            <person name="Bachman K.E."/>
            <person name="Papadopoulos N."/>
            <person name="Vogelstein B."/>
            <person name="Kinzler K.W."/>
            <person name="Velculescu V.E."/>
        </authorList>
    </citation>
    <scope>VARIANTS [LARGE SCALE ANALYSIS] ARG-126; VAL-375 AND LEU-1045</scope>
</reference>
<name>NALP8_HUMAN</name>
<protein>
    <recommendedName>
        <fullName>NACHT, LRR and PYD domains-containing protein 8</fullName>
    </recommendedName>
    <alternativeName>
        <fullName>Nucleotide-binding oligomerization domain protein 16</fullName>
    </alternativeName>
    <alternativeName>
        <fullName>PYRIN and NACHT-containing protein 4</fullName>
    </alternativeName>
</protein>
<feature type="chain" id="PRO_0000282990" description="NACHT, LRR and PYD domains-containing protein 8">
    <location>
        <begin position="1"/>
        <end position="1048"/>
    </location>
</feature>
<feature type="domain" description="Pyrin" evidence="2">
    <location>
        <begin position="33"/>
        <end position="131"/>
    </location>
</feature>
<feature type="domain" description="NACHT" evidence="3">
    <location>
        <begin position="204"/>
        <end position="527"/>
    </location>
</feature>
<feature type="repeat" description="LRR 2">
    <location>
        <begin position="815"/>
        <end position="838"/>
    </location>
</feature>
<feature type="repeat" description="LRR 3">
    <location>
        <begin position="839"/>
        <end position="861"/>
    </location>
</feature>
<feature type="repeat" description="LRR 4">
    <location>
        <begin position="866"/>
        <end position="890"/>
    </location>
</feature>
<feature type="repeat" description="LRR 5">
    <location>
        <begin position="923"/>
        <end position="950"/>
    </location>
</feature>
<feature type="repeat" description="LRR 6">
    <location>
        <begin position="980"/>
        <end position="1007"/>
    </location>
</feature>
<feature type="region of interest" description="Disordered" evidence="4">
    <location>
        <begin position="1"/>
        <end position="23"/>
    </location>
</feature>
<feature type="region of interest" description="Disordered" evidence="4">
    <location>
        <begin position="1029"/>
        <end position="1048"/>
    </location>
</feature>
<feature type="compositionally biased region" description="Low complexity" evidence="4">
    <location>
        <begin position="11"/>
        <end position="23"/>
    </location>
</feature>
<feature type="binding site" evidence="3">
    <location>
        <begin position="210"/>
        <end position="217"/>
    </location>
    <ligand>
        <name>ATP</name>
        <dbReference type="ChEBI" id="CHEBI:30616"/>
    </ligand>
</feature>
<feature type="splice variant" id="VSP_024274" description="In isoform 2." evidence="6">
    <location>
        <begin position="846"/>
        <end position="864"/>
    </location>
</feature>
<feature type="sequence variant" id="VAR_031452" description="In dbSNP:rs306507.">
    <original>P</original>
    <variation>L</variation>
    <location>
        <position position="25"/>
    </location>
</feature>
<feature type="sequence variant" id="VAR_031453" description="In dbSNP:rs306506.">
    <original>V</original>
    <variation>L</variation>
    <location>
        <position position="116"/>
    </location>
</feature>
<feature type="sequence variant" id="VAR_036383" description="In a breast cancer sample; somatic mutation; dbSNP:rs61739987." evidence="5">
    <original>P</original>
    <variation>R</variation>
    <location>
        <position position="126"/>
    </location>
</feature>
<feature type="sequence variant" id="VAR_031454" description="In dbSNP:rs11880691.">
    <original>A</original>
    <variation>T</variation>
    <location>
        <position position="234"/>
    </location>
</feature>
<feature type="sequence variant" id="VAR_031455" description="In dbSNP:rs7259764.">
    <original>Q</original>
    <variation>R</variation>
    <location>
        <position position="268"/>
    </location>
</feature>
<feature type="sequence variant" id="VAR_031456" description="In dbSNP:rs11880748.">
    <original>Q</original>
    <variation>E</variation>
    <location>
        <position position="367"/>
    </location>
</feature>
<feature type="sequence variant" id="VAR_036384" description="In a breast cancer sample; somatic mutation." evidence="5">
    <original>E</original>
    <variation>V</variation>
    <location>
        <position position="375"/>
    </location>
</feature>
<feature type="sequence variant" id="VAR_053618" description="In dbSNP:rs41391053.">
    <original>A</original>
    <variation>V</variation>
    <location>
        <position position="543"/>
    </location>
</feature>
<feature type="sequence variant" id="VAR_053619" description="In dbSNP:rs41481648.">
    <original>R</original>
    <variation>W</variation>
    <location>
        <position position="651"/>
    </location>
</feature>
<feature type="sequence variant" id="VAR_031457" description="In dbSNP:rs306496.">
    <original>V</original>
    <variation>A</variation>
    <location>
        <position position="782"/>
    </location>
</feature>
<feature type="sequence variant" id="VAR_031458" description="In dbSNP:rs306481.">
    <original>K</original>
    <variation>R</variation>
    <location>
        <position position="937"/>
    </location>
</feature>
<feature type="sequence variant" id="VAR_036385" description="In a colorectal cancer sample; somatic mutation." evidence="5">
    <original>Q</original>
    <variation>L</variation>
    <location>
        <position position="1045"/>
    </location>
</feature>
<keyword id="KW-0025">Alternative splicing</keyword>
<keyword id="KW-0067">ATP-binding</keyword>
<keyword id="KW-0963">Cytoplasm</keyword>
<keyword id="KW-0433">Leucine-rich repeat</keyword>
<keyword id="KW-0547">Nucleotide-binding</keyword>
<keyword id="KW-1185">Reference proteome</keyword>
<keyword id="KW-0677">Repeat</keyword>
<organism>
    <name type="scientific">Homo sapiens</name>
    <name type="common">Human</name>
    <dbReference type="NCBI Taxonomy" id="9606"/>
    <lineage>
        <taxon>Eukaryota</taxon>
        <taxon>Metazoa</taxon>
        <taxon>Chordata</taxon>
        <taxon>Craniata</taxon>
        <taxon>Vertebrata</taxon>
        <taxon>Euteleostomi</taxon>
        <taxon>Mammalia</taxon>
        <taxon>Eutheria</taxon>
        <taxon>Euarchontoglires</taxon>
        <taxon>Primates</taxon>
        <taxon>Haplorrhini</taxon>
        <taxon>Catarrhini</taxon>
        <taxon>Hominidae</taxon>
        <taxon>Homo</taxon>
    </lineage>
</organism>
<proteinExistence type="evidence at transcript level"/>
<dbReference type="EMBL" id="AY154463">
    <property type="protein sequence ID" value="AAO18159.1"/>
    <property type="molecule type" value="mRNA"/>
</dbReference>
<dbReference type="EMBL" id="BK001109">
    <property type="protein sequence ID" value="DAA01242.1"/>
    <property type="molecule type" value="mRNA"/>
</dbReference>
<dbReference type="CCDS" id="CCDS12937.1">
    <molecule id="Q86W28-1"/>
</dbReference>
<dbReference type="CCDS" id="CCDS82402.1">
    <molecule id="Q86W28-2"/>
</dbReference>
<dbReference type="RefSeq" id="NP_001303929.1">
    <molecule id="Q86W28-2"/>
    <property type="nucleotide sequence ID" value="NM_001317000.1"/>
</dbReference>
<dbReference type="RefSeq" id="NP_789781.2">
    <molecule id="Q86W28-1"/>
    <property type="nucleotide sequence ID" value="NM_176811.2"/>
</dbReference>
<dbReference type="SMR" id="Q86W28"/>
<dbReference type="BioGRID" id="125964">
    <property type="interactions" value="21"/>
</dbReference>
<dbReference type="IntAct" id="Q86W28">
    <property type="interactions" value="2"/>
</dbReference>
<dbReference type="STRING" id="9606.ENSP00000291971"/>
<dbReference type="iPTMnet" id="Q86W28"/>
<dbReference type="PhosphoSitePlus" id="Q86W28"/>
<dbReference type="BioMuta" id="NLRP8"/>
<dbReference type="DMDM" id="143355070"/>
<dbReference type="jPOST" id="Q86W28"/>
<dbReference type="MassIVE" id="Q86W28"/>
<dbReference type="PaxDb" id="9606-ENSP00000291971"/>
<dbReference type="ProteomicsDB" id="70106">
    <molecule id="Q86W28-1"/>
</dbReference>
<dbReference type="ProteomicsDB" id="70107">
    <molecule id="Q86W28-2"/>
</dbReference>
<dbReference type="Antibodypedia" id="46494">
    <property type="antibodies" value="39 antibodies from 19 providers"/>
</dbReference>
<dbReference type="DNASU" id="126205"/>
<dbReference type="Ensembl" id="ENST00000291971.7">
    <molecule id="Q86W28-1"/>
    <property type="protein sequence ID" value="ENSP00000291971.3"/>
    <property type="gene ID" value="ENSG00000179709.8"/>
</dbReference>
<dbReference type="Ensembl" id="ENST00000590542.1">
    <molecule id="Q86W28-2"/>
    <property type="protein sequence ID" value="ENSP00000468121.1"/>
    <property type="gene ID" value="ENSG00000179709.8"/>
</dbReference>
<dbReference type="GeneID" id="126205"/>
<dbReference type="KEGG" id="hsa:126205"/>
<dbReference type="MANE-Select" id="ENST00000291971.7">
    <property type="protein sequence ID" value="ENSP00000291971.3"/>
    <property type="RefSeq nucleotide sequence ID" value="NM_176811.2"/>
    <property type="RefSeq protein sequence ID" value="NP_789781.2"/>
</dbReference>
<dbReference type="UCSC" id="uc002qmh.3">
    <molecule id="Q86W28-1"/>
    <property type="organism name" value="human"/>
</dbReference>
<dbReference type="AGR" id="HGNC:22940"/>
<dbReference type="CTD" id="126205"/>
<dbReference type="DisGeNET" id="126205"/>
<dbReference type="GeneCards" id="NLRP8"/>
<dbReference type="HGNC" id="HGNC:22940">
    <property type="gene designation" value="NLRP8"/>
</dbReference>
<dbReference type="HPA" id="ENSG00000179709">
    <property type="expression patterns" value="Not detected"/>
</dbReference>
<dbReference type="MIM" id="609659">
    <property type="type" value="gene"/>
</dbReference>
<dbReference type="neXtProt" id="NX_Q86W28"/>
<dbReference type="OpenTargets" id="ENSG00000179709"/>
<dbReference type="PharmGKB" id="PA162398028"/>
<dbReference type="VEuPathDB" id="HostDB:ENSG00000179709"/>
<dbReference type="eggNOG" id="ENOG502RSHR">
    <property type="taxonomic scope" value="Eukaryota"/>
</dbReference>
<dbReference type="GeneTree" id="ENSGT00940000163909"/>
<dbReference type="HOGENOM" id="CLU_002274_2_1_1"/>
<dbReference type="InParanoid" id="Q86W28"/>
<dbReference type="OMA" id="FPGRLAW"/>
<dbReference type="OrthoDB" id="120976at2759"/>
<dbReference type="PAN-GO" id="Q86W28">
    <property type="GO annotations" value="2 GO annotations based on evolutionary models"/>
</dbReference>
<dbReference type="PhylomeDB" id="Q86W28"/>
<dbReference type="PathwayCommons" id="Q86W28"/>
<dbReference type="SignaLink" id="Q86W28"/>
<dbReference type="BioGRID-ORCS" id="126205">
    <property type="hits" value="8 hits in 1147 CRISPR screens"/>
</dbReference>
<dbReference type="ChiTaRS" id="NLRP8">
    <property type="organism name" value="human"/>
</dbReference>
<dbReference type="GeneWiki" id="NLRP8"/>
<dbReference type="GenomeRNAi" id="126205"/>
<dbReference type="Pharos" id="Q86W28">
    <property type="development level" value="Tdark"/>
</dbReference>
<dbReference type="PRO" id="PR:Q86W28"/>
<dbReference type="Proteomes" id="UP000005640">
    <property type="component" value="Chromosome 19"/>
</dbReference>
<dbReference type="RNAct" id="Q86W28">
    <property type="molecule type" value="protein"/>
</dbReference>
<dbReference type="Bgee" id="ENSG00000179709">
    <property type="expression patterns" value="Expressed in secondary oocyte and 1 other cell type or tissue"/>
</dbReference>
<dbReference type="GO" id="GO:0005737">
    <property type="term" value="C:cytoplasm"/>
    <property type="evidence" value="ECO:0000318"/>
    <property type="project" value="GO_Central"/>
</dbReference>
<dbReference type="GO" id="GO:0005524">
    <property type="term" value="F:ATP binding"/>
    <property type="evidence" value="ECO:0007669"/>
    <property type="project" value="UniProtKB-KW"/>
</dbReference>
<dbReference type="GO" id="GO:0050727">
    <property type="term" value="P:regulation of inflammatory response"/>
    <property type="evidence" value="ECO:0000318"/>
    <property type="project" value="GO_Central"/>
</dbReference>
<dbReference type="CDD" id="cd08320">
    <property type="entry name" value="Pyrin_NALPs"/>
    <property type="match status" value="1"/>
</dbReference>
<dbReference type="Gene3D" id="1.10.533.10">
    <property type="entry name" value="Death Domain, Fas"/>
    <property type="match status" value="1"/>
</dbReference>
<dbReference type="Gene3D" id="3.40.50.300">
    <property type="entry name" value="P-loop containing nucleotide triphosphate hydrolases"/>
    <property type="match status" value="1"/>
</dbReference>
<dbReference type="Gene3D" id="3.80.10.10">
    <property type="entry name" value="Ribonuclease Inhibitor"/>
    <property type="match status" value="1"/>
</dbReference>
<dbReference type="InterPro" id="IPR004020">
    <property type="entry name" value="DAPIN"/>
</dbReference>
<dbReference type="InterPro" id="IPR011029">
    <property type="entry name" value="DEATH-like_dom_sf"/>
</dbReference>
<dbReference type="InterPro" id="IPR001611">
    <property type="entry name" value="Leu-rich_rpt"/>
</dbReference>
<dbReference type="InterPro" id="IPR032675">
    <property type="entry name" value="LRR_dom_sf"/>
</dbReference>
<dbReference type="InterPro" id="IPR007111">
    <property type="entry name" value="NACHT_NTPase"/>
</dbReference>
<dbReference type="InterPro" id="IPR041267">
    <property type="entry name" value="NLRP_HD2"/>
</dbReference>
<dbReference type="InterPro" id="IPR050637">
    <property type="entry name" value="NLRP_innate_immun_reg"/>
</dbReference>
<dbReference type="InterPro" id="IPR041075">
    <property type="entry name" value="NOD1/2_WH"/>
</dbReference>
<dbReference type="InterPro" id="IPR027417">
    <property type="entry name" value="P-loop_NTPase"/>
</dbReference>
<dbReference type="PANTHER" id="PTHR45690">
    <property type="entry name" value="NACHT, LRR AND PYD DOMAINS-CONTAINING PROTEIN 12"/>
    <property type="match status" value="1"/>
</dbReference>
<dbReference type="PANTHER" id="PTHR45690:SF8">
    <property type="entry name" value="NACHT, LRR AND PYD DOMAINS-CONTAINING PROTEIN 8"/>
    <property type="match status" value="1"/>
</dbReference>
<dbReference type="Pfam" id="PF13516">
    <property type="entry name" value="LRR_6"/>
    <property type="match status" value="3"/>
</dbReference>
<dbReference type="Pfam" id="PF05729">
    <property type="entry name" value="NACHT"/>
    <property type="match status" value="1"/>
</dbReference>
<dbReference type="Pfam" id="PF17776">
    <property type="entry name" value="NLRC4_HD2"/>
    <property type="match status" value="1"/>
</dbReference>
<dbReference type="Pfam" id="PF17779">
    <property type="entry name" value="NOD2_WH"/>
    <property type="match status" value="1"/>
</dbReference>
<dbReference type="Pfam" id="PF02758">
    <property type="entry name" value="PYRIN"/>
    <property type="match status" value="1"/>
</dbReference>
<dbReference type="SMART" id="SM00368">
    <property type="entry name" value="LRR_RI"/>
    <property type="match status" value="7"/>
</dbReference>
<dbReference type="SMART" id="SM01289">
    <property type="entry name" value="PYRIN"/>
    <property type="match status" value="1"/>
</dbReference>
<dbReference type="SUPFAM" id="SSF47986">
    <property type="entry name" value="DEATH domain"/>
    <property type="match status" value="1"/>
</dbReference>
<dbReference type="SUPFAM" id="SSF52540">
    <property type="entry name" value="P-loop containing nucleoside triphosphate hydrolases"/>
    <property type="match status" value="1"/>
</dbReference>
<dbReference type="SUPFAM" id="SSF52047">
    <property type="entry name" value="RNI-like"/>
    <property type="match status" value="1"/>
</dbReference>
<dbReference type="PROSITE" id="PS50824">
    <property type="entry name" value="DAPIN"/>
    <property type="match status" value="1"/>
</dbReference>
<dbReference type="PROSITE" id="PS50837">
    <property type="entry name" value="NACHT"/>
    <property type="match status" value="1"/>
</dbReference>